<sequence>MLGLIQAAKSLLLLEFMSAFFLAMRQFFSPKPTINYPYEKGVVSQRFRGEHALRRYPNGEERCIACKLCEAICPAQAITIEAGPRRNDGTRRTVRYDIDMVKCIYCGFCQEACPVEAIVEGPNFEFATETREELYYDKEKLLMNGDRWEREIARNILMDAPYR</sequence>
<dbReference type="EC" id="7.1.1.-" evidence="1"/>
<dbReference type="EMBL" id="BX897699">
    <property type="protein sequence ID" value="CAF27685.1"/>
    <property type="molecule type" value="Genomic_DNA"/>
</dbReference>
<dbReference type="RefSeq" id="WP_011180780.1">
    <property type="nucleotide sequence ID" value="NZ_LRIJ02000001.1"/>
</dbReference>
<dbReference type="SMR" id="Q6G396"/>
<dbReference type="PaxDb" id="283166-BH08870"/>
<dbReference type="EnsemblBacteria" id="CAF27685">
    <property type="protein sequence ID" value="CAF27685"/>
    <property type="gene ID" value="BH08870"/>
</dbReference>
<dbReference type="GeneID" id="92985451"/>
<dbReference type="KEGG" id="bhe:BH08870"/>
<dbReference type="eggNOG" id="COG1143">
    <property type="taxonomic scope" value="Bacteria"/>
</dbReference>
<dbReference type="OrthoDB" id="9808559at2"/>
<dbReference type="Proteomes" id="UP000000421">
    <property type="component" value="Chromosome"/>
</dbReference>
<dbReference type="GO" id="GO:0005886">
    <property type="term" value="C:plasma membrane"/>
    <property type="evidence" value="ECO:0007669"/>
    <property type="project" value="UniProtKB-SubCell"/>
</dbReference>
<dbReference type="GO" id="GO:0051539">
    <property type="term" value="F:4 iron, 4 sulfur cluster binding"/>
    <property type="evidence" value="ECO:0007669"/>
    <property type="project" value="UniProtKB-KW"/>
</dbReference>
<dbReference type="GO" id="GO:0005506">
    <property type="term" value="F:iron ion binding"/>
    <property type="evidence" value="ECO:0007669"/>
    <property type="project" value="UniProtKB-UniRule"/>
</dbReference>
<dbReference type="GO" id="GO:0050136">
    <property type="term" value="F:NADH:ubiquinone reductase (non-electrogenic) activity"/>
    <property type="evidence" value="ECO:0007669"/>
    <property type="project" value="UniProtKB-UniRule"/>
</dbReference>
<dbReference type="GO" id="GO:0048038">
    <property type="term" value="F:quinone binding"/>
    <property type="evidence" value="ECO:0007669"/>
    <property type="project" value="UniProtKB-KW"/>
</dbReference>
<dbReference type="GO" id="GO:0009060">
    <property type="term" value="P:aerobic respiration"/>
    <property type="evidence" value="ECO:0007669"/>
    <property type="project" value="TreeGrafter"/>
</dbReference>
<dbReference type="FunFam" id="3.30.70.3270:FF:000001">
    <property type="entry name" value="NADH-quinone oxidoreductase subunit I 1"/>
    <property type="match status" value="1"/>
</dbReference>
<dbReference type="Gene3D" id="3.30.70.3270">
    <property type="match status" value="1"/>
</dbReference>
<dbReference type="HAMAP" id="MF_01351">
    <property type="entry name" value="NDH1_NuoI"/>
    <property type="match status" value="1"/>
</dbReference>
<dbReference type="InterPro" id="IPR017896">
    <property type="entry name" value="4Fe4S_Fe-S-bd"/>
</dbReference>
<dbReference type="InterPro" id="IPR017900">
    <property type="entry name" value="4Fe4S_Fe_S_CS"/>
</dbReference>
<dbReference type="InterPro" id="IPR010226">
    <property type="entry name" value="NADH_quinone_OxRdtase_chainI"/>
</dbReference>
<dbReference type="NCBIfam" id="TIGR01971">
    <property type="entry name" value="NuoI"/>
    <property type="match status" value="1"/>
</dbReference>
<dbReference type="NCBIfam" id="NF004538">
    <property type="entry name" value="PRK05888.1-4"/>
    <property type="match status" value="1"/>
</dbReference>
<dbReference type="NCBIfam" id="NF004539">
    <property type="entry name" value="PRK05888.1-5"/>
    <property type="match status" value="1"/>
</dbReference>
<dbReference type="PANTHER" id="PTHR10849:SF20">
    <property type="entry name" value="NADH DEHYDROGENASE [UBIQUINONE] IRON-SULFUR PROTEIN 8, MITOCHONDRIAL"/>
    <property type="match status" value="1"/>
</dbReference>
<dbReference type="PANTHER" id="PTHR10849">
    <property type="entry name" value="NADH DEHYDROGENASE UBIQUINONE IRON-SULFUR PROTEIN 8, MITOCHONDRIAL"/>
    <property type="match status" value="1"/>
</dbReference>
<dbReference type="Pfam" id="PF12838">
    <property type="entry name" value="Fer4_7"/>
    <property type="match status" value="1"/>
</dbReference>
<dbReference type="SUPFAM" id="SSF54862">
    <property type="entry name" value="4Fe-4S ferredoxins"/>
    <property type="match status" value="1"/>
</dbReference>
<dbReference type="PROSITE" id="PS00198">
    <property type="entry name" value="4FE4S_FER_1"/>
    <property type="match status" value="2"/>
</dbReference>
<dbReference type="PROSITE" id="PS51379">
    <property type="entry name" value="4FE4S_FER_2"/>
    <property type="match status" value="2"/>
</dbReference>
<protein>
    <recommendedName>
        <fullName evidence="1">NADH-quinone oxidoreductase subunit I</fullName>
        <ecNumber evidence="1">7.1.1.-</ecNumber>
    </recommendedName>
    <alternativeName>
        <fullName evidence="1">NADH dehydrogenase I subunit I</fullName>
    </alternativeName>
    <alternativeName>
        <fullName evidence="1">NDH-1 subunit I</fullName>
    </alternativeName>
</protein>
<proteinExistence type="inferred from homology"/>
<reference key="1">
    <citation type="journal article" date="2004" name="Proc. Natl. Acad. Sci. U.S.A.">
        <title>The louse-borne human pathogen Bartonella quintana is a genomic derivative of the zoonotic agent Bartonella henselae.</title>
        <authorList>
            <person name="Alsmark U.C.M."/>
            <person name="Frank A.C."/>
            <person name="Karlberg E.O."/>
            <person name="Legault B.-A."/>
            <person name="Ardell D.H."/>
            <person name="Canbaeck B."/>
            <person name="Eriksson A.-S."/>
            <person name="Naeslund A.K."/>
            <person name="Handley S.A."/>
            <person name="Huvet M."/>
            <person name="La Scola B."/>
            <person name="Holmberg M."/>
            <person name="Andersson S.G.E."/>
        </authorList>
    </citation>
    <scope>NUCLEOTIDE SEQUENCE [LARGE SCALE GENOMIC DNA]</scope>
    <source>
        <strain>ATCC 49882 / DSM 28221 / CCUG 30454 / Houston 1</strain>
    </source>
</reference>
<evidence type="ECO:0000255" key="1">
    <source>
        <dbReference type="HAMAP-Rule" id="MF_01351"/>
    </source>
</evidence>
<organism>
    <name type="scientific">Bartonella henselae (strain ATCC 49882 / DSM 28221 / CCUG 30454 / Houston 1)</name>
    <name type="common">Rochalimaea henselae</name>
    <dbReference type="NCBI Taxonomy" id="283166"/>
    <lineage>
        <taxon>Bacteria</taxon>
        <taxon>Pseudomonadati</taxon>
        <taxon>Pseudomonadota</taxon>
        <taxon>Alphaproteobacteria</taxon>
        <taxon>Hyphomicrobiales</taxon>
        <taxon>Bartonellaceae</taxon>
        <taxon>Bartonella</taxon>
    </lineage>
</organism>
<accession>Q6G396</accession>
<keyword id="KW-0004">4Fe-4S</keyword>
<keyword id="KW-0997">Cell inner membrane</keyword>
<keyword id="KW-1003">Cell membrane</keyword>
<keyword id="KW-0408">Iron</keyword>
<keyword id="KW-0411">Iron-sulfur</keyword>
<keyword id="KW-0472">Membrane</keyword>
<keyword id="KW-0479">Metal-binding</keyword>
<keyword id="KW-0520">NAD</keyword>
<keyword id="KW-0874">Quinone</keyword>
<keyword id="KW-0677">Repeat</keyword>
<keyword id="KW-1278">Translocase</keyword>
<keyword id="KW-0830">Ubiquinone</keyword>
<gene>
    <name evidence="1" type="primary">nuoI</name>
    <name type="ordered locus">BH08870</name>
</gene>
<name>NUOI_BARHE</name>
<comment type="function">
    <text evidence="1">NDH-1 shuttles electrons from NADH, via FMN and iron-sulfur (Fe-S) centers, to quinones in the respiratory chain. The immediate electron acceptor for the enzyme in this species is believed to be ubiquinone. Couples the redox reaction to proton translocation (for every two electrons transferred, four hydrogen ions are translocated across the cytoplasmic membrane), and thus conserves the redox energy in a proton gradient.</text>
</comment>
<comment type="catalytic activity">
    <reaction evidence="1">
        <text>a quinone + NADH + 5 H(+)(in) = a quinol + NAD(+) + 4 H(+)(out)</text>
        <dbReference type="Rhea" id="RHEA:57888"/>
        <dbReference type="ChEBI" id="CHEBI:15378"/>
        <dbReference type="ChEBI" id="CHEBI:24646"/>
        <dbReference type="ChEBI" id="CHEBI:57540"/>
        <dbReference type="ChEBI" id="CHEBI:57945"/>
        <dbReference type="ChEBI" id="CHEBI:132124"/>
    </reaction>
</comment>
<comment type="cofactor">
    <cofactor evidence="1">
        <name>[4Fe-4S] cluster</name>
        <dbReference type="ChEBI" id="CHEBI:49883"/>
    </cofactor>
    <text evidence="1">Binds 2 [4Fe-4S] clusters per subunit.</text>
</comment>
<comment type="subunit">
    <text evidence="1">NDH-1 is composed of 14 different subunits. Subunits NuoA, H, J, K, L, M, N constitute the membrane sector of the complex.</text>
</comment>
<comment type="subcellular location">
    <subcellularLocation>
        <location evidence="1">Cell inner membrane</location>
        <topology evidence="1">Peripheral membrane protein</topology>
    </subcellularLocation>
</comment>
<comment type="similarity">
    <text evidence="1">Belongs to the complex I 23 kDa subunit family.</text>
</comment>
<feature type="chain" id="PRO_0000250877" description="NADH-quinone oxidoreductase subunit I">
    <location>
        <begin position="1"/>
        <end position="163"/>
    </location>
</feature>
<feature type="domain" description="4Fe-4S ferredoxin-type 1" evidence="1">
    <location>
        <begin position="53"/>
        <end position="83"/>
    </location>
</feature>
<feature type="domain" description="4Fe-4S ferredoxin-type 2" evidence="1">
    <location>
        <begin position="94"/>
        <end position="123"/>
    </location>
</feature>
<feature type="binding site" evidence="1">
    <location>
        <position position="63"/>
    </location>
    <ligand>
        <name>[4Fe-4S] cluster</name>
        <dbReference type="ChEBI" id="CHEBI:49883"/>
        <label>1</label>
    </ligand>
</feature>
<feature type="binding site" evidence="1">
    <location>
        <position position="66"/>
    </location>
    <ligand>
        <name>[4Fe-4S] cluster</name>
        <dbReference type="ChEBI" id="CHEBI:49883"/>
        <label>1</label>
    </ligand>
</feature>
<feature type="binding site" evidence="1">
    <location>
        <position position="69"/>
    </location>
    <ligand>
        <name>[4Fe-4S] cluster</name>
        <dbReference type="ChEBI" id="CHEBI:49883"/>
        <label>1</label>
    </ligand>
</feature>
<feature type="binding site" evidence="1">
    <location>
        <position position="73"/>
    </location>
    <ligand>
        <name>[4Fe-4S] cluster</name>
        <dbReference type="ChEBI" id="CHEBI:49883"/>
        <label>2</label>
    </ligand>
</feature>
<feature type="binding site" evidence="1">
    <location>
        <position position="103"/>
    </location>
    <ligand>
        <name>[4Fe-4S] cluster</name>
        <dbReference type="ChEBI" id="CHEBI:49883"/>
        <label>2</label>
    </ligand>
</feature>
<feature type="binding site" evidence="1">
    <location>
        <position position="106"/>
    </location>
    <ligand>
        <name>[4Fe-4S] cluster</name>
        <dbReference type="ChEBI" id="CHEBI:49883"/>
        <label>2</label>
    </ligand>
</feature>
<feature type="binding site" evidence="1">
    <location>
        <position position="109"/>
    </location>
    <ligand>
        <name>[4Fe-4S] cluster</name>
        <dbReference type="ChEBI" id="CHEBI:49883"/>
        <label>2</label>
    </ligand>
</feature>
<feature type="binding site" evidence="1">
    <location>
        <position position="113"/>
    </location>
    <ligand>
        <name>[4Fe-4S] cluster</name>
        <dbReference type="ChEBI" id="CHEBI:49883"/>
        <label>1</label>
    </ligand>
</feature>